<proteinExistence type="inferred from homology"/>
<sequence>MKRMKLRTNAGPLQGTIQVPGDKSISHRAVILGAVAKGETRVKGLLKGEDVLSTIQAFRNLGVRIEEKDDQLVIEGQGFQGLTAPCQTLNMGNSGTSMRLIAGLLAGQPFSVKMIGDESLSKRPMDRIVYPLKQMGVEISGETDRQFPPLQLQGNRNLQPITYTLPISSAQVKSAILLAALQAKGTTQVVEKEITRNHTEEMIQQFGGRLIVDGKRITLVGPQQLTAQEITVPGDISSAAFWLVAGLIIPGSELLLKNVGVNPTRTGILEVVEKMGAQIVYEDMNKKEQVTSIRVVYSHLKGTIISGGLIPRLIDELPIIALLATQAQGTTCIKDAQELRVKETDRIQVVTDTLNSMGANIKATADGMIIKGPTVLYGANTSTYGDHRIGMMTAIAALLVKQGQVHLDKEEAIMTSYPTFFKDLERLCHD</sequence>
<reference key="1">
    <citation type="journal article" date="2006" name="Proc. Natl. Acad. Sci. U.S.A.">
        <title>Molecular genetic anatomy of inter- and intraserotype variation in the human bacterial pathogen group A Streptococcus.</title>
        <authorList>
            <person name="Beres S.B."/>
            <person name="Richter E.W."/>
            <person name="Nagiec M.J."/>
            <person name="Sumby P."/>
            <person name="Porcella S.F."/>
            <person name="DeLeo F.R."/>
            <person name="Musser J.M."/>
        </authorList>
    </citation>
    <scope>NUCLEOTIDE SEQUENCE [LARGE SCALE GENOMIC DNA]</scope>
    <source>
        <strain>MGAS2096</strain>
    </source>
</reference>
<gene>
    <name evidence="1" type="primary">aroA</name>
    <name type="ordered locus">MGAS2096_Spy1163</name>
</gene>
<comment type="function">
    <text evidence="1">Catalyzes the transfer of the enolpyruvyl moiety of phosphoenolpyruvate (PEP) to the 5-hydroxyl of shikimate-3-phosphate (S3P) to produce enolpyruvyl shikimate-3-phosphate and inorganic phosphate.</text>
</comment>
<comment type="catalytic activity">
    <reaction evidence="1">
        <text>3-phosphoshikimate + phosphoenolpyruvate = 5-O-(1-carboxyvinyl)-3-phosphoshikimate + phosphate</text>
        <dbReference type="Rhea" id="RHEA:21256"/>
        <dbReference type="ChEBI" id="CHEBI:43474"/>
        <dbReference type="ChEBI" id="CHEBI:57701"/>
        <dbReference type="ChEBI" id="CHEBI:58702"/>
        <dbReference type="ChEBI" id="CHEBI:145989"/>
        <dbReference type="EC" id="2.5.1.19"/>
    </reaction>
    <physiologicalReaction direction="left-to-right" evidence="1">
        <dbReference type="Rhea" id="RHEA:21257"/>
    </physiologicalReaction>
</comment>
<comment type="pathway">
    <text evidence="1">Metabolic intermediate biosynthesis; chorismate biosynthesis; chorismate from D-erythrose 4-phosphate and phosphoenolpyruvate: step 6/7.</text>
</comment>
<comment type="subunit">
    <text evidence="1">Monomer.</text>
</comment>
<comment type="subcellular location">
    <subcellularLocation>
        <location evidence="1">Cytoplasm</location>
    </subcellularLocation>
</comment>
<comment type="similarity">
    <text evidence="1">Belongs to the EPSP synthase family.</text>
</comment>
<name>AROA_STRPB</name>
<keyword id="KW-0028">Amino-acid biosynthesis</keyword>
<keyword id="KW-0057">Aromatic amino acid biosynthesis</keyword>
<keyword id="KW-0963">Cytoplasm</keyword>
<keyword id="KW-0808">Transferase</keyword>
<protein>
    <recommendedName>
        <fullName evidence="1">3-phosphoshikimate 1-carboxyvinyltransferase</fullName>
        <ecNumber evidence="1">2.5.1.19</ecNumber>
    </recommendedName>
    <alternativeName>
        <fullName evidence="1">5-enolpyruvylshikimate-3-phosphate synthase</fullName>
        <shortName evidence="1">EPSP synthase</shortName>
        <shortName evidence="1">EPSPS</shortName>
    </alternativeName>
</protein>
<organism>
    <name type="scientific">Streptococcus pyogenes serotype M12 (strain MGAS2096)</name>
    <dbReference type="NCBI Taxonomy" id="370553"/>
    <lineage>
        <taxon>Bacteria</taxon>
        <taxon>Bacillati</taxon>
        <taxon>Bacillota</taxon>
        <taxon>Bacilli</taxon>
        <taxon>Lactobacillales</taxon>
        <taxon>Streptococcaceae</taxon>
        <taxon>Streptococcus</taxon>
    </lineage>
</organism>
<dbReference type="EC" id="2.5.1.19" evidence="1"/>
<dbReference type="EMBL" id="CP000261">
    <property type="protein sequence ID" value="ABF36215.1"/>
    <property type="molecule type" value="Genomic_DNA"/>
</dbReference>
<dbReference type="SMR" id="Q1JB43"/>
<dbReference type="KEGG" id="spj:MGAS2096_Spy1163"/>
<dbReference type="HOGENOM" id="CLU_024321_0_1_9"/>
<dbReference type="UniPathway" id="UPA00053">
    <property type="reaction ID" value="UER00089"/>
</dbReference>
<dbReference type="GO" id="GO:0005737">
    <property type="term" value="C:cytoplasm"/>
    <property type="evidence" value="ECO:0007669"/>
    <property type="project" value="UniProtKB-SubCell"/>
</dbReference>
<dbReference type="GO" id="GO:0003866">
    <property type="term" value="F:3-phosphoshikimate 1-carboxyvinyltransferase activity"/>
    <property type="evidence" value="ECO:0007669"/>
    <property type="project" value="UniProtKB-UniRule"/>
</dbReference>
<dbReference type="GO" id="GO:0008652">
    <property type="term" value="P:amino acid biosynthetic process"/>
    <property type="evidence" value="ECO:0007669"/>
    <property type="project" value="UniProtKB-KW"/>
</dbReference>
<dbReference type="GO" id="GO:0009073">
    <property type="term" value="P:aromatic amino acid family biosynthetic process"/>
    <property type="evidence" value="ECO:0007669"/>
    <property type="project" value="UniProtKB-KW"/>
</dbReference>
<dbReference type="GO" id="GO:0009423">
    <property type="term" value="P:chorismate biosynthetic process"/>
    <property type="evidence" value="ECO:0007669"/>
    <property type="project" value="UniProtKB-UniRule"/>
</dbReference>
<dbReference type="CDD" id="cd01556">
    <property type="entry name" value="EPSP_synthase"/>
    <property type="match status" value="1"/>
</dbReference>
<dbReference type="FunFam" id="3.65.10.10:FF:000005">
    <property type="entry name" value="3-phosphoshikimate 1-carboxyvinyltransferase"/>
    <property type="match status" value="1"/>
</dbReference>
<dbReference type="FunFam" id="3.65.10.10:FF:000006">
    <property type="entry name" value="3-phosphoshikimate 1-carboxyvinyltransferase"/>
    <property type="match status" value="1"/>
</dbReference>
<dbReference type="Gene3D" id="3.65.10.10">
    <property type="entry name" value="Enolpyruvate transferase domain"/>
    <property type="match status" value="2"/>
</dbReference>
<dbReference type="HAMAP" id="MF_00210">
    <property type="entry name" value="EPSP_synth"/>
    <property type="match status" value="1"/>
</dbReference>
<dbReference type="InterPro" id="IPR001986">
    <property type="entry name" value="Enolpyruvate_Tfrase_dom"/>
</dbReference>
<dbReference type="InterPro" id="IPR036968">
    <property type="entry name" value="Enolpyruvate_Tfrase_sf"/>
</dbReference>
<dbReference type="InterPro" id="IPR006264">
    <property type="entry name" value="EPSP_synthase"/>
</dbReference>
<dbReference type="InterPro" id="IPR023193">
    <property type="entry name" value="EPSP_synthase_CS"/>
</dbReference>
<dbReference type="InterPro" id="IPR013792">
    <property type="entry name" value="RNA3'P_cycl/enolpyr_Trfase_a/b"/>
</dbReference>
<dbReference type="NCBIfam" id="TIGR01356">
    <property type="entry name" value="aroA"/>
    <property type="match status" value="1"/>
</dbReference>
<dbReference type="PANTHER" id="PTHR21090">
    <property type="entry name" value="AROM/DEHYDROQUINATE SYNTHASE"/>
    <property type="match status" value="1"/>
</dbReference>
<dbReference type="PANTHER" id="PTHR21090:SF5">
    <property type="entry name" value="PENTAFUNCTIONAL AROM POLYPEPTIDE"/>
    <property type="match status" value="1"/>
</dbReference>
<dbReference type="Pfam" id="PF00275">
    <property type="entry name" value="EPSP_synthase"/>
    <property type="match status" value="1"/>
</dbReference>
<dbReference type="PIRSF" id="PIRSF000505">
    <property type="entry name" value="EPSPS"/>
    <property type="match status" value="1"/>
</dbReference>
<dbReference type="SUPFAM" id="SSF55205">
    <property type="entry name" value="EPT/RTPC-like"/>
    <property type="match status" value="1"/>
</dbReference>
<dbReference type="PROSITE" id="PS00104">
    <property type="entry name" value="EPSP_SYNTHASE_1"/>
    <property type="match status" value="1"/>
</dbReference>
<dbReference type="PROSITE" id="PS00885">
    <property type="entry name" value="EPSP_SYNTHASE_2"/>
    <property type="match status" value="1"/>
</dbReference>
<evidence type="ECO:0000255" key="1">
    <source>
        <dbReference type="HAMAP-Rule" id="MF_00210"/>
    </source>
</evidence>
<accession>Q1JB43</accession>
<feature type="chain" id="PRO_1000012491" description="3-phosphoshikimate 1-carboxyvinyltransferase">
    <location>
        <begin position="1"/>
        <end position="430"/>
    </location>
</feature>
<feature type="active site" description="Proton acceptor" evidence="1">
    <location>
        <position position="315"/>
    </location>
</feature>
<feature type="binding site" evidence="1">
    <location>
        <position position="23"/>
    </location>
    <ligand>
        <name>3-phosphoshikimate</name>
        <dbReference type="ChEBI" id="CHEBI:145989"/>
    </ligand>
</feature>
<feature type="binding site" evidence="1">
    <location>
        <position position="23"/>
    </location>
    <ligand>
        <name>phosphoenolpyruvate</name>
        <dbReference type="ChEBI" id="CHEBI:58702"/>
    </ligand>
</feature>
<feature type="binding site" evidence="1">
    <location>
        <position position="24"/>
    </location>
    <ligand>
        <name>3-phosphoshikimate</name>
        <dbReference type="ChEBI" id="CHEBI:145989"/>
    </ligand>
</feature>
<feature type="binding site" evidence="1">
    <location>
        <position position="28"/>
    </location>
    <ligand>
        <name>3-phosphoshikimate</name>
        <dbReference type="ChEBI" id="CHEBI:145989"/>
    </ligand>
</feature>
<feature type="binding site" evidence="1">
    <location>
        <position position="95"/>
    </location>
    <ligand>
        <name>phosphoenolpyruvate</name>
        <dbReference type="ChEBI" id="CHEBI:58702"/>
    </ligand>
</feature>
<feature type="binding site" evidence="1">
    <location>
        <position position="123"/>
    </location>
    <ligand>
        <name>phosphoenolpyruvate</name>
        <dbReference type="ChEBI" id="CHEBI:58702"/>
    </ligand>
</feature>
<feature type="binding site" evidence="1">
    <location>
        <position position="169"/>
    </location>
    <ligand>
        <name>3-phosphoshikimate</name>
        <dbReference type="ChEBI" id="CHEBI:145989"/>
    </ligand>
</feature>
<feature type="binding site" evidence="1">
    <location>
        <position position="171"/>
    </location>
    <ligand>
        <name>3-phosphoshikimate</name>
        <dbReference type="ChEBI" id="CHEBI:145989"/>
    </ligand>
</feature>
<feature type="binding site" evidence="1">
    <location>
        <position position="171"/>
    </location>
    <ligand>
        <name>phosphoenolpyruvate</name>
        <dbReference type="ChEBI" id="CHEBI:58702"/>
    </ligand>
</feature>
<feature type="binding site" evidence="1">
    <location>
        <position position="315"/>
    </location>
    <ligand>
        <name>3-phosphoshikimate</name>
        <dbReference type="ChEBI" id="CHEBI:145989"/>
    </ligand>
</feature>
<feature type="binding site" evidence="1">
    <location>
        <position position="342"/>
    </location>
    <ligand>
        <name>3-phosphoshikimate</name>
        <dbReference type="ChEBI" id="CHEBI:145989"/>
    </ligand>
</feature>
<feature type="binding site" evidence="1">
    <location>
        <position position="346"/>
    </location>
    <ligand>
        <name>phosphoenolpyruvate</name>
        <dbReference type="ChEBI" id="CHEBI:58702"/>
    </ligand>
</feature>
<feature type="binding site" evidence="1">
    <location>
        <position position="388"/>
    </location>
    <ligand>
        <name>phosphoenolpyruvate</name>
        <dbReference type="ChEBI" id="CHEBI:58702"/>
    </ligand>
</feature>